<dbReference type="EMBL" id="CBYH010014123">
    <property type="status" value="NOT_ANNOTATED_CDS"/>
    <property type="molecule type" value="Genomic_DNA"/>
</dbReference>
<dbReference type="SMR" id="P0DN40"/>
<dbReference type="GO" id="GO:0042627">
    <property type="term" value="C:chylomicron"/>
    <property type="evidence" value="ECO:0007669"/>
    <property type="project" value="UniProtKB-KW"/>
</dbReference>
<dbReference type="GO" id="GO:0034364">
    <property type="term" value="C:high-density lipoprotein particle"/>
    <property type="evidence" value="ECO:0007669"/>
    <property type="project" value="UniProtKB-KW"/>
</dbReference>
<dbReference type="GO" id="GO:0034362">
    <property type="term" value="C:low-density lipoprotein particle"/>
    <property type="evidence" value="ECO:0007669"/>
    <property type="project" value="UniProtKB-KW"/>
</dbReference>
<dbReference type="GO" id="GO:0034361">
    <property type="term" value="C:very-low-density lipoprotein particle"/>
    <property type="evidence" value="ECO:0007669"/>
    <property type="project" value="UniProtKB-KW"/>
</dbReference>
<dbReference type="GO" id="GO:0016004">
    <property type="term" value="F:phospholipase activator activity"/>
    <property type="evidence" value="ECO:0007669"/>
    <property type="project" value="TreeGrafter"/>
</dbReference>
<dbReference type="GO" id="GO:0043274">
    <property type="term" value="F:phospholipase binding"/>
    <property type="evidence" value="ECO:0007669"/>
    <property type="project" value="TreeGrafter"/>
</dbReference>
<dbReference type="GO" id="GO:0016042">
    <property type="term" value="P:lipid catabolic process"/>
    <property type="evidence" value="ECO:0007669"/>
    <property type="project" value="UniProtKB-KW"/>
</dbReference>
<dbReference type="GO" id="GO:0006869">
    <property type="term" value="P:lipid transport"/>
    <property type="evidence" value="ECO:0007669"/>
    <property type="project" value="UniProtKB-KW"/>
</dbReference>
<dbReference type="GO" id="GO:0060697">
    <property type="term" value="P:positive regulation of phospholipid catabolic process"/>
    <property type="evidence" value="ECO:0007669"/>
    <property type="project" value="TreeGrafter"/>
</dbReference>
<dbReference type="FunFam" id="1.10.1440.10:FF:000001">
    <property type="entry name" value="Apolipoprotein C-II"/>
    <property type="match status" value="1"/>
</dbReference>
<dbReference type="Gene3D" id="1.10.1440.10">
    <property type="entry name" value="Apolipoprotein C-II"/>
    <property type="match status" value="1"/>
</dbReference>
<dbReference type="InterPro" id="IPR008019">
    <property type="entry name" value="Apo-CII"/>
</dbReference>
<dbReference type="InterPro" id="IPR023121">
    <property type="entry name" value="ApoC-II_dom_sf"/>
</dbReference>
<dbReference type="PANTHER" id="PTHR16566">
    <property type="entry name" value="APOLIPOPROTEIN C-II"/>
    <property type="match status" value="1"/>
</dbReference>
<dbReference type="PANTHER" id="PTHR16566:SF0">
    <property type="entry name" value="APOLIPOPROTEIN C-II"/>
    <property type="match status" value="1"/>
</dbReference>
<dbReference type="Pfam" id="PF05355">
    <property type="entry name" value="Apo-CII"/>
    <property type="match status" value="1"/>
</dbReference>
<sequence length="101" mass="11118">MGTRYFLVGFLILLVLGFEAQGAHVPQQDEASSPALLTKMQKSLLGYWDTAKAAAHKLYKKTYLPTVDEKIRDIYSKSTAAVTTYAGIITDQVFSILSGED</sequence>
<name>APOC2_CAPHE</name>
<gene>
    <name type="primary">APOC2</name>
</gene>
<organism>
    <name type="scientific">Capra hircus aegagrus</name>
    <name type="common">Wild goat</name>
    <name type="synonym">Capra aegagrus</name>
    <dbReference type="NCBI Taxonomy" id="9923"/>
    <lineage>
        <taxon>Eukaryota</taxon>
        <taxon>Metazoa</taxon>
        <taxon>Chordata</taxon>
        <taxon>Craniata</taxon>
        <taxon>Vertebrata</taxon>
        <taxon>Euteleostomi</taxon>
        <taxon>Mammalia</taxon>
        <taxon>Eutheria</taxon>
        <taxon>Laurasiatheria</taxon>
        <taxon>Artiodactyla</taxon>
        <taxon>Ruminantia</taxon>
        <taxon>Pecora</taxon>
        <taxon>Bovidae</taxon>
        <taxon>Caprinae</taxon>
        <taxon>Capra</taxon>
    </lineage>
</organism>
<accession>P0DN40</accession>
<feature type="signal peptide" evidence="2">
    <location>
        <begin position="1"/>
        <end position="22"/>
    </location>
</feature>
<feature type="chain" id="PRO_0000435012" description="Proapolipoprotein C-II">
    <location>
        <begin position="23"/>
        <end position="101"/>
    </location>
</feature>
<feature type="chain" id="PRO_0000435013" description="Apolipoprotein C-II" evidence="1">
    <location>
        <begin position="29"/>
        <end position="101"/>
    </location>
</feature>
<feature type="region of interest" description="Lipid binding" evidence="1">
    <location>
        <begin position="66"/>
        <end position="74"/>
    </location>
</feature>
<feature type="region of interest" description="Lipoprotein lipase cofactor" evidence="1">
    <location>
        <begin position="78"/>
        <end position="101"/>
    </location>
</feature>
<protein>
    <recommendedName>
        <fullName>Apolipoprotein C-II</fullName>
        <shortName>Apo-CII</shortName>
        <shortName>ApoC-II</shortName>
    </recommendedName>
    <alternativeName>
        <fullName>Apolipoprotein C2</fullName>
    </alternativeName>
    <component>
        <recommendedName>
            <fullName>Proapolipoprotein C-II</fullName>
            <shortName>ProapoC-II</shortName>
        </recommendedName>
    </component>
</protein>
<reference key="1">
    <citation type="submission" date="2014-02" db="EMBL/GenBank/DDBJ databases">
        <authorList>
            <person name="Streeter I."/>
        </authorList>
    </citation>
    <scope>NUCLEOTIDE SEQUENCE [LARGE SCALE GENOMIC DNA]</scope>
</reference>
<reference key="2">
    <citation type="unpublished observations" date="2015-10">
        <authorList>
            <person name="Puppione D.L."/>
        </authorList>
    </citation>
    <scope>IDENTIFICATION</scope>
</reference>
<proteinExistence type="inferred from homology"/>
<comment type="function">
    <text evidence="1">Component of chylomicrons, very low-density lipoproteins (VLDL), low-density lipoproteins (LDL), and high-density lipoproteins (HDL) in plasma. Plays an important role in lipoprotein metabolism as an activator of lipoprotein lipase. Both proapolipoprotein C-II and apolipoprotein C-II can activate lipoprotein lipase.</text>
</comment>
<comment type="subcellular location">
    <subcellularLocation>
        <location evidence="1">Secreted</location>
    </subcellularLocation>
</comment>
<comment type="PTM">
    <text evidence="1">Proapolipoprotein C-II is synthesized as a sialic acid containing glycoprotein which is subsequently desialylated prior to its proteolytic processing.</text>
</comment>
<comment type="PTM">
    <text evidence="1">Proapolipoprotein C-II, the major form found in plasma undergoes proteolytic cleavage of its N-terminal hexapeptide to generate apolipoprotein C-II, which occurs as the minor form in plasma.</text>
</comment>
<comment type="similarity">
    <text evidence="3">Belongs to the apolipoprotein C2 family.</text>
</comment>
<keyword id="KW-0162">Chylomicron</keyword>
<keyword id="KW-0325">Glycoprotein</keyword>
<keyword id="KW-0345">HDL</keyword>
<keyword id="KW-0427">LDL</keyword>
<keyword id="KW-0442">Lipid degradation</keyword>
<keyword id="KW-0443">Lipid metabolism</keyword>
<keyword id="KW-0445">Lipid transport</keyword>
<keyword id="KW-0964">Secreted</keyword>
<keyword id="KW-0730">Sialic acid</keyword>
<keyword id="KW-0732">Signal</keyword>
<keyword id="KW-0813">Transport</keyword>
<keyword id="KW-0850">VLDL</keyword>
<evidence type="ECO:0000250" key="1">
    <source>
        <dbReference type="UniProtKB" id="P02655"/>
    </source>
</evidence>
<evidence type="ECO:0000255" key="2"/>
<evidence type="ECO:0000305" key="3"/>